<proteinExistence type="evidence at protein level"/>
<keyword id="KW-0963">Cytoplasm</keyword>
<keyword id="KW-0378">Hydrolase</keyword>
<keyword id="KW-0479">Metal-binding</keyword>
<keyword id="KW-0546">Nucleotide metabolism</keyword>
<keyword id="KW-0597">Phosphoprotein</keyword>
<keyword id="KW-1185">Reference proteome</keyword>
<keyword id="KW-0862">Zinc</keyword>
<evidence type="ECO:0000250" key="1"/>
<evidence type="ECO:0000255" key="2">
    <source>
        <dbReference type="PROSITE-ProRule" id="PRU10104"/>
    </source>
</evidence>
<evidence type="ECO:0000256" key="3">
    <source>
        <dbReference type="SAM" id="MobiDB-lite"/>
    </source>
</evidence>
<evidence type="ECO:0000269" key="4">
    <source>
    </source>
</evidence>
<evidence type="ECO:0000269" key="5">
    <source>
    </source>
</evidence>
<evidence type="ECO:0000269" key="6">
    <source>
    </source>
</evidence>
<evidence type="ECO:0000305" key="7"/>
<organism>
    <name type="scientific">Schizosaccharomyces pombe (strain 972 / ATCC 24843)</name>
    <name type="common">Fission yeast</name>
    <dbReference type="NCBI Taxonomy" id="284812"/>
    <lineage>
        <taxon>Eukaryota</taxon>
        <taxon>Fungi</taxon>
        <taxon>Dikarya</taxon>
        <taxon>Ascomycota</taxon>
        <taxon>Taphrinomycotina</taxon>
        <taxon>Schizosaccharomycetes</taxon>
        <taxon>Schizosaccharomycetales</taxon>
        <taxon>Schizosaccharomycetaceae</taxon>
        <taxon>Schizosaccharomyces</taxon>
    </lineage>
</organism>
<feature type="chain" id="PRO_0000194413" description="AMP deaminase">
    <location>
        <begin position="1"/>
        <end position="831"/>
    </location>
</feature>
<feature type="region of interest" description="Disordered" evidence="3">
    <location>
        <begin position="26"/>
        <end position="45"/>
    </location>
</feature>
<feature type="region of interest" description="Disordered" evidence="3">
    <location>
        <begin position="66"/>
        <end position="110"/>
    </location>
</feature>
<feature type="region of interest" description="Disordered" evidence="3">
    <location>
        <begin position="130"/>
        <end position="149"/>
    </location>
</feature>
<feature type="active site" description="Proton acceptor" evidence="2">
    <location>
        <position position="609"/>
    </location>
</feature>
<feature type="binding site" evidence="1">
    <location>
        <position position="319"/>
    </location>
    <ligand>
        <name>Zn(2+)</name>
        <dbReference type="ChEBI" id="CHEBI:29105"/>
        <note>catalytic</note>
    </ligand>
</feature>
<feature type="binding site" evidence="1">
    <location>
        <position position="321"/>
    </location>
    <ligand>
        <name>substrate</name>
    </ligand>
</feature>
<feature type="binding site" evidence="1">
    <location>
        <position position="321"/>
    </location>
    <ligand>
        <name>Zn(2+)</name>
        <dbReference type="ChEBI" id="CHEBI:29105"/>
        <note>catalytic</note>
    </ligand>
</feature>
<feature type="binding site" evidence="1">
    <location>
        <begin position="390"/>
        <end position="395"/>
    </location>
    <ligand>
        <name>substrate</name>
    </ligand>
</feature>
<feature type="binding site" evidence="1">
    <location>
        <position position="587"/>
    </location>
    <ligand>
        <name>Zn(2+)</name>
        <dbReference type="ChEBI" id="CHEBI:29105"/>
        <note>catalytic</note>
    </ligand>
</feature>
<feature type="binding site" evidence="1">
    <location>
        <position position="590"/>
    </location>
    <ligand>
        <name>substrate</name>
    </ligand>
</feature>
<feature type="binding site" evidence="1">
    <location>
        <position position="664"/>
    </location>
    <ligand>
        <name>Zn(2+)</name>
        <dbReference type="ChEBI" id="CHEBI:29105"/>
        <note>catalytic</note>
    </ligand>
</feature>
<feature type="binding site" evidence="1">
    <location>
        <begin position="665"/>
        <end position="668"/>
    </location>
    <ligand>
        <name>substrate</name>
    </ligand>
</feature>
<feature type="modified residue" description="Phosphoserine" evidence="5">
    <location>
        <position position="79"/>
    </location>
</feature>
<feature type="modified residue" description="Phosphoserine" evidence="5">
    <location>
        <position position="84"/>
    </location>
</feature>
<feature type="modified residue" description="Phosphoserine" evidence="5">
    <location>
        <position position="758"/>
    </location>
</feature>
<feature type="modified residue" description="Phosphoserine" evidence="5">
    <location>
        <position position="776"/>
    </location>
</feature>
<feature type="modified residue" description="Phosphoserine" evidence="5">
    <location>
        <position position="780"/>
    </location>
</feature>
<feature type="modified residue" description="Phosphoserine" evidence="5">
    <location>
        <position position="782"/>
    </location>
</feature>
<feature type="sequence conflict" description="In Ref. 1; CAA62797." evidence="7" ref="1">
    <original>NVRWLIQVPRLYDVYKKSGIVETFEEVVRNVFEPLFEV</original>
    <variation>TFVGLFKYLVCMMCIRSPVLLRLLKRSSEMSLNHCSKF</variation>
    <location>
        <begin position="468"/>
        <end position="505"/>
    </location>
</feature>
<reference key="1">
    <citation type="submission" date="1995-09" db="EMBL/GenBank/DDBJ databases">
        <authorList>
            <person name="Rochet M."/>
            <person name="Levesque H."/>
            <person name="Gaillardin C."/>
        </authorList>
    </citation>
    <scope>NUCLEOTIDE SEQUENCE [GENOMIC DNA]</scope>
    <source>
        <strain>972 / ATCC 24843</strain>
    </source>
</reference>
<reference key="2">
    <citation type="journal article" date="2002" name="Nature">
        <title>The genome sequence of Schizosaccharomyces pombe.</title>
        <authorList>
            <person name="Wood V."/>
            <person name="Gwilliam R."/>
            <person name="Rajandream M.A."/>
            <person name="Lyne M.H."/>
            <person name="Lyne R."/>
            <person name="Stewart A."/>
            <person name="Sgouros J.G."/>
            <person name="Peat N."/>
            <person name="Hayles J."/>
            <person name="Baker S.G."/>
            <person name="Basham D."/>
            <person name="Bowman S."/>
            <person name="Brooks K."/>
            <person name="Brown D."/>
            <person name="Brown S."/>
            <person name="Chillingworth T."/>
            <person name="Churcher C.M."/>
            <person name="Collins M."/>
            <person name="Connor R."/>
            <person name="Cronin A."/>
            <person name="Davis P."/>
            <person name="Feltwell T."/>
            <person name="Fraser A."/>
            <person name="Gentles S."/>
            <person name="Goble A."/>
            <person name="Hamlin N."/>
            <person name="Harris D.E."/>
            <person name="Hidalgo J."/>
            <person name="Hodgson G."/>
            <person name="Holroyd S."/>
            <person name="Hornsby T."/>
            <person name="Howarth S."/>
            <person name="Huckle E.J."/>
            <person name="Hunt S."/>
            <person name="Jagels K."/>
            <person name="James K.D."/>
            <person name="Jones L."/>
            <person name="Jones M."/>
            <person name="Leather S."/>
            <person name="McDonald S."/>
            <person name="McLean J."/>
            <person name="Mooney P."/>
            <person name="Moule S."/>
            <person name="Mungall K.L."/>
            <person name="Murphy L.D."/>
            <person name="Niblett D."/>
            <person name="Odell C."/>
            <person name="Oliver K."/>
            <person name="O'Neil S."/>
            <person name="Pearson D."/>
            <person name="Quail M.A."/>
            <person name="Rabbinowitsch E."/>
            <person name="Rutherford K.M."/>
            <person name="Rutter S."/>
            <person name="Saunders D."/>
            <person name="Seeger K."/>
            <person name="Sharp S."/>
            <person name="Skelton J."/>
            <person name="Simmonds M.N."/>
            <person name="Squares R."/>
            <person name="Squares S."/>
            <person name="Stevens K."/>
            <person name="Taylor K."/>
            <person name="Taylor R.G."/>
            <person name="Tivey A."/>
            <person name="Walsh S.V."/>
            <person name="Warren T."/>
            <person name="Whitehead S."/>
            <person name="Woodward J.R."/>
            <person name="Volckaert G."/>
            <person name="Aert R."/>
            <person name="Robben J."/>
            <person name="Grymonprez B."/>
            <person name="Weltjens I."/>
            <person name="Vanstreels E."/>
            <person name="Rieger M."/>
            <person name="Schaefer M."/>
            <person name="Mueller-Auer S."/>
            <person name="Gabel C."/>
            <person name="Fuchs M."/>
            <person name="Duesterhoeft A."/>
            <person name="Fritzc C."/>
            <person name="Holzer E."/>
            <person name="Moestl D."/>
            <person name="Hilbert H."/>
            <person name="Borzym K."/>
            <person name="Langer I."/>
            <person name="Beck A."/>
            <person name="Lehrach H."/>
            <person name="Reinhardt R."/>
            <person name="Pohl T.M."/>
            <person name="Eger P."/>
            <person name="Zimmermann W."/>
            <person name="Wedler H."/>
            <person name="Wambutt R."/>
            <person name="Purnelle B."/>
            <person name="Goffeau A."/>
            <person name="Cadieu E."/>
            <person name="Dreano S."/>
            <person name="Gloux S."/>
            <person name="Lelaure V."/>
            <person name="Mottier S."/>
            <person name="Galibert F."/>
            <person name="Aves S.J."/>
            <person name="Xiang Z."/>
            <person name="Hunt C."/>
            <person name="Moore K."/>
            <person name="Hurst S.M."/>
            <person name="Lucas M."/>
            <person name="Rochet M."/>
            <person name="Gaillardin C."/>
            <person name="Tallada V.A."/>
            <person name="Garzon A."/>
            <person name="Thode G."/>
            <person name="Daga R.R."/>
            <person name="Cruzado L."/>
            <person name="Jimenez J."/>
            <person name="Sanchez M."/>
            <person name="del Rey F."/>
            <person name="Benito J."/>
            <person name="Dominguez A."/>
            <person name="Revuelta J.L."/>
            <person name="Moreno S."/>
            <person name="Armstrong J."/>
            <person name="Forsburg S.L."/>
            <person name="Cerutti L."/>
            <person name="Lowe T."/>
            <person name="McCombie W.R."/>
            <person name="Paulsen I."/>
            <person name="Potashkin J."/>
            <person name="Shpakovski G.V."/>
            <person name="Ussery D."/>
            <person name="Barrell B.G."/>
            <person name="Nurse P."/>
        </authorList>
    </citation>
    <scope>NUCLEOTIDE SEQUENCE [LARGE SCALE GENOMIC DNA]</scope>
    <source>
        <strain>972 / ATCC 24843</strain>
    </source>
</reference>
<reference key="3">
    <citation type="journal article" date="2011" name="Science">
        <title>Comparative functional genomics of the fission yeasts.</title>
        <authorList>
            <person name="Rhind N."/>
            <person name="Chen Z."/>
            <person name="Yassour M."/>
            <person name="Thompson D.A."/>
            <person name="Haas B.J."/>
            <person name="Habib N."/>
            <person name="Wapinski I."/>
            <person name="Roy S."/>
            <person name="Lin M.F."/>
            <person name="Heiman D.I."/>
            <person name="Young S.K."/>
            <person name="Furuya K."/>
            <person name="Guo Y."/>
            <person name="Pidoux A."/>
            <person name="Chen H.M."/>
            <person name="Robbertse B."/>
            <person name="Goldberg J.M."/>
            <person name="Aoki K."/>
            <person name="Bayne E.H."/>
            <person name="Berlin A.M."/>
            <person name="Desjardins C.A."/>
            <person name="Dobbs E."/>
            <person name="Dukaj L."/>
            <person name="Fan L."/>
            <person name="FitzGerald M.G."/>
            <person name="French C."/>
            <person name="Gujja S."/>
            <person name="Hansen K."/>
            <person name="Keifenheim D."/>
            <person name="Levin J.Z."/>
            <person name="Mosher R.A."/>
            <person name="Mueller C.A."/>
            <person name="Pfiffner J."/>
            <person name="Priest M."/>
            <person name="Russ C."/>
            <person name="Smialowska A."/>
            <person name="Swoboda P."/>
            <person name="Sykes S.M."/>
            <person name="Vaughn M."/>
            <person name="Vengrova S."/>
            <person name="Yoder R."/>
            <person name="Zeng Q."/>
            <person name="Allshire R."/>
            <person name="Baulcombe D."/>
            <person name="Birren B.W."/>
            <person name="Brown W."/>
            <person name="Ekwall K."/>
            <person name="Kellis M."/>
            <person name="Leatherwood J."/>
            <person name="Levin H."/>
            <person name="Margalit H."/>
            <person name="Martienssen R."/>
            <person name="Nieduszynski C.A."/>
            <person name="Spatafora J.W."/>
            <person name="Friedman N."/>
            <person name="Dalgaard J.Z."/>
            <person name="Baumann P."/>
            <person name="Niki H."/>
            <person name="Regev A."/>
            <person name="Nusbaum C."/>
        </authorList>
    </citation>
    <scope>REVISION OF GENE MODEL</scope>
</reference>
<reference key="4">
    <citation type="journal article" date="1993" name="J. Biol. Chem.">
        <title>Yeast AMP deaminase. Catalytic activity in Schizosaccharomyces pombe and chromosomal location in Saccharomyces cerevisiae.</title>
        <authorList>
            <person name="Sollitti P."/>
            <person name="Merkler D.J."/>
            <person name="Estupinan B."/>
            <person name="Schramm V.L."/>
        </authorList>
    </citation>
    <scope>CATALYTIC ACTIVITY</scope>
</reference>
<reference key="5">
    <citation type="journal article" date="2006" name="Nat. Biotechnol.">
        <title>ORFeome cloning and global analysis of protein localization in the fission yeast Schizosaccharomyces pombe.</title>
        <authorList>
            <person name="Matsuyama A."/>
            <person name="Arai R."/>
            <person name="Yashiroda Y."/>
            <person name="Shirai A."/>
            <person name="Kamata A."/>
            <person name="Sekido S."/>
            <person name="Kobayashi Y."/>
            <person name="Hashimoto A."/>
            <person name="Hamamoto M."/>
            <person name="Hiraoka Y."/>
            <person name="Horinouchi S."/>
            <person name="Yoshida M."/>
        </authorList>
    </citation>
    <scope>SUBCELLULAR LOCATION [LARGE SCALE ANALYSIS]</scope>
</reference>
<reference key="6">
    <citation type="journal article" date="2008" name="J. Proteome Res.">
        <title>Phosphoproteome analysis of fission yeast.</title>
        <authorList>
            <person name="Wilson-Grady J.T."/>
            <person name="Villen J."/>
            <person name="Gygi S.P."/>
        </authorList>
    </citation>
    <scope>PHOSPHORYLATION [LARGE SCALE ANALYSIS] AT SER-79; SER-84; SER-758; SER-776; SER-780 AND SER-782</scope>
    <scope>IDENTIFICATION BY MASS SPECTROMETRY</scope>
</reference>
<dbReference type="EC" id="3.5.4.6"/>
<dbReference type="EMBL" id="X91498">
    <property type="protein sequence ID" value="CAA62797.1"/>
    <property type="status" value="ALT_SEQ"/>
    <property type="molecule type" value="Genomic_DNA"/>
</dbReference>
<dbReference type="EMBL" id="CU329671">
    <property type="protein sequence ID" value="CAB53720.2"/>
    <property type="molecule type" value="Genomic_DNA"/>
</dbReference>
<dbReference type="PIR" id="T39261">
    <property type="entry name" value="T39261"/>
</dbReference>
<dbReference type="RefSeq" id="NP_595153.2">
    <property type="nucleotide sequence ID" value="NM_001021062.2"/>
</dbReference>
<dbReference type="SMR" id="P50998"/>
<dbReference type="BioGRID" id="276642">
    <property type="interactions" value="76"/>
</dbReference>
<dbReference type="FunCoup" id="P50998">
    <property type="interactions" value="441"/>
</dbReference>
<dbReference type="STRING" id="284812.P50998"/>
<dbReference type="iPTMnet" id="P50998"/>
<dbReference type="PaxDb" id="4896-SPBC106.04.1"/>
<dbReference type="EnsemblFungi" id="SPBC106.04.1">
    <property type="protein sequence ID" value="SPBC106.04.1:pep"/>
    <property type="gene ID" value="SPBC106.04"/>
</dbReference>
<dbReference type="GeneID" id="2540105"/>
<dbReference type="KEGG" id="spo:2540105"/>
<dbReference type="PomBase" id="SPBC106.04">
    <property type="gene designation" value="ada1"/>
</dbReference>
<dbReference type="VEuPathDB" id="FungiDB:SPBC106.04"/>
<dbReference type="eggNOG" id="KOG1096">
    <property type="taxonomic scope" value="Eukaryota"/>
</dbReference>
<dbReference type="HOGENOM" id="CLU_003782_2_2_1"/>
<dbReference type="InParanoid" id="P50998"/>
<dbReference type="OMA" id="MYGNIMV"/>
<dbReference type="Reactome" id="R-SPO-6798695">
    <property type="pathway name" value="Neutrophil degranulation"/>
</dbReference>
<dbReference type="Reactome" id="R-SPO-74217">
    <property type="pathway name" value="Purine salvage"/>
</dbReference>
<dbReference type="UniPathway" id="UPA00591">
    <property type="reaction ID" value="UER00663"/>
</dbReference>
<dbReference type="PRO" id="PR:P50998"/>
<dbReference type="Proteomes" id="UP000002485">
    <property type="component" value="Chromosome II"/>
</dbReference>
<dbReference type="GO" id="GO:0005829">
    <property type="term" value="C:cytosol"/>
    <property type="evidence" value="ECO:0007005"/>
    <property type="project" value="PomBase"/>
</dbReference>
<dbReference type="GO" id="GO:0003876">
    <property type="term" value="F:AMP deaminase activity"/>
    <property type="evidence" value="ECO:0000314"/>
    <property type="project" value="PomBase"/>
</dbReference>
<dbReference type="GO" id="GO:0046872">
    <property type="term" value="F:metal ion binding"/>
    <property type="evidence" value="ECO:0007669"/>
    <property type="project" value="UniProtKB-KW"/>
</dbReference>
<dbReference type="GO" id="GO:0046033">
    <property type="term" value="P:AMP metabolic process"/>
    <property type="evidence" value="ECO:0000318"/>
    <property type="project" value="GO_Central"/>
</dbReference>
<dbReference type="GO" id="GO:0006188">
    <property type="term" value="P:IMP biosynthetic process"/>
    <property type="evidence" value="ECO:0000318"/>
    <property type="project" value="GO_Central"/>
</dbReference>
<dbReference type="GO" id="GO:0032264">
    <property type="term" value="P:IMP salvage"/>
    <property type="evidence" value="ECO:0007669"/>
    <property type="project" value="UniProtKB-UniPathway"/>
</dbReference>
<dbReference type="CDD" id="cd01319">
    <property type="entry name" value="AMPD"/>
    <property type="match status" value="1"/>
</dbReference>
<dbReference type="FunFam" id="4.10.800.20:FF:000001">
    <property type="entry name" value="AMP deaminase"/>
    <property type="match status" value="1"/>
</dbReference>
<dbReference type="Gene3D" id="4.10.800.20">
    <property type="match status" value="1"/>
</dbReference>
<dbReference type="Gene3D" id="3.20.20.140">
    <property type="entry name" value="Metal-dependent hydrolases"/>
    <property type="match status" value="1"/>
</dbReference>
<dbReference type="InterPro" id="IPR006650">
    <property type="entry name" value="A/AMP_deam_AS"/>
</dbReference>
<dbReference type="InterPro" id="IPR006329">
    <property type="entry name" value="AMPD"/>
</dbReference>
<dbReference type="InterPro" id="IPR032466">
    <property type="entry name" value="Metal_Hydrolase"/>
</dbReference>
<dbReference type="NCBIfam" id="TIGR01429">
    <property type="entry name" value="AMP_deaminase"/>
    <property type="match status" value="1"/>
</dbReference>
<dbReference type="PANTHER" id="PTHR11359">
    <property type="entry name" value="AMP DEAMINASE"/>
    <property type="match status" value="1"/>
</dbReference>
<dbReference type="PANTHER" id="PTHR11359:SF0">
    <property type="entry name" value="AMP DEAMINASE"/>
    <property type="match status" value="1"/>
</dbReference>
<dbReference type="Pfam" id="PF19326">
    <property type="entry name" value="AMP_deaminase"/>
    <property type="match status" value="1"/>
</dbReference>
<dbReference type="PIRSF" id="PIRSF001251">
    <property type="entry name" value="AMP_deaminase_met"/>
    <property type="match status" value="1"/>
</dbReference>
<dbReference type="SUPFAM" id="SSF51556">
    <property type="entry name" value="Metallo-dependent hydrolases"/>
    <property type="match status" value="1"/>
</dbReference>
<dbReference type="PROSITE" id="PS00485">
    <property type="entry name" value="A_DEAMINASE"/>
    <property type="match status" value="1"/>
</dbReference>
<comment type="function">
    <text>AMP deaminase plays a critical role in energy metabolism.</text>
</comment>
<comment type="catalytic activity">
    <reaction evidence="6">
        <text>AMP + H2O + H(+) = IMP + NH4(+)</text>
        <dbReference type="Rhea" id="RHEA:14777"/>
        <dbReference type="ChEBI" id="CHEBI:15377"/>
        <dbReference type="ChEBI" id="CHEBI:15378"/>
        <dbReference type="ChEBI" id="CHEBI:28938"/>
        <dbReference type="ChEBI" id="CHEBI:58053"/>
        <dbReference type="ChEBI" id="CHEBI:456215"/>
        <dbReference type="EC" id="3.5.4.6"/>
    </reaction>
</comment>
<comment type="cofactor">
    <cofactor evidence="1">
        <name>Zn(2+)</name>
        <dbReference type="ChEBI" id="CHEBI:29105"/>
    </cofactor>
    <text evidence="1">Binds 1 zinc ion per subunit.</text>
</comment>
<comment type="pathway">
    <text>Purine metabolism; IMP biosynthesis via salvage pathway; IMP from AMP: step 1/1.</text>
</comment>
<comment type="subunit">
    <text evidence="1">Homotetramer.</text>
</comment>
<comment type="subcellular location">
    <subcellularLocation>
        <location evidence="4">Cytoplasm</location>
    </subcellularLocation>
</comment>
<comment type="similarity">
    <text evidence="7">Belongs to the metallo-dependent hydrolases superfamily. Adenosine and AMP deaminases family.</text>
</comment>
<sequence>MNMEQEDDQVPAVAAETVPLKRYVTNPGANRDEEVAAAPSSQDTPYFDYAYERSLRHQDAKFLAMNGTQNGRDGLPSKSPRRPSVSASTVRNSDDVNHSKAGPGSGKLLNDTLQSKISSIHMPHVQQGDNAVVSSVGGPETDPGNMETTDPLFSDELAEIYLSIHKCMDMRHKYIRVSLQGELDNPIDDDSWIIYPDCKEGEDDTGLFNFADCKIPGIENEMEYHMDHQGIFQVYENDSAYIAGTPSFHIPTIRDYYIDLEFLLSASSDGPSKSFSFRRLQYLEGRWNMYMLLNEYQELADTKKVPHRDFYNVRKVDTHVHHSALANQKHLLRFIKAKLRKCPNEKVIWRDGKFLTLQEVFDSLKLTSYDLSIDTLDMHAHTDTFHRFDKFNLKYNPIGESRLRTIFLKTDNDINGRYLAELTKEVFTDLRTQKYQMAEYRISIYGRNREEWDKLAAWIIDNELFSPNVRWLIQVPRLYDVYKKSGIVETFEEVVRNVFEPLFEVTKDPRTHPKLHVFLQRVIGFDSVDDESKPERRTFRKFPYPKHWDINLNPPYSYWLYYMYANMTSLNSWRKIRGFNTFVLRPHCGEAGDTDHLASAFLLSHGINHGILLRKVPFLQYLWYLDQIPIAMSPLSNNALFLAYDKNPFLTYFKRGLNVSLSTDDPLQFAFTREPLIEEYAVAAQIYKLSAVDMCELARNSVLQSGFERQLKERWLGVDFQDIDRTNVPIIRLAYRALTLTQEIALVNKHVQPSKHPSNHDLEELIHKYDAMTGTSDPLSASPRTNDATISSRLSLHDGHDHGAFFPGLSVISERRRRKDSMASSSQDLKD</sequence>
<gene>
    <name type="primary">ada1</name>
    <name type="ORF">SPBC106.04</name>
</gene>
<accession>P50998</accession>
<accession>Q9URV7</accession>
<name>AMPD_SCHPO</name>
<protein>
    <recommendedName>
        <fullName>AMP deaminase</fullName>
        <ecNumber>3.5.4.6</ecNumber>
    </recommendedName>
    <alternativeName>
        <fullName>Myoadenylate deaminase</fullName>
    </alternativeName>
</protein>